<accession>Q7Z0V9</accession>
<reference key="1">
    <citation type="journal article" date="2004" name="Mol. Biochem. Parasitol.">
        <title>Chloroquine resistance in Plasmodium chabaudi: are chloroquine-resistance transporter (crt) and multi-drug resistance (mdr1) orthologues involved?</title>
        <authorList>
            <person name="Hunt P."/>
            <person name="Cravo P.V."/>
            <person name="Donleavy P."/>
            <person name="Carlton J.M.-R."/>
            <person name="Walliker D."/>
        </authorList>
    </citation>
    <scope>NUCLEOTIDE SEQUENCE [GENOMIC DNA]</scope>
</reference>
<evidence type="ECO:0000250" key="1">
    <source>
        <dbReference type="UniProtKB" id="Q9N623"/>
    </source>
</evidence>
<evidence type="ECO:0000250" key="2">
    <source>
        <dbReference type="UniProtKB" id="W7FI62"/>
    </source>
</evidence>
<evidence type="ECO:0000255" key="3"/>
<evidence type="ECO:0000305" key="4"/>
<proteinExistence type="inferred from homology"/>
<organism>
    <name type="scientific">Plasmodium chabaudi</name>
    <dbReference type="NCBI Taxonomy" id="5825"/>
    <lineage>
        <taxon>Eukaryota</taxon>
        <taxon>Sar</taxon>
        <taxon>Alveolata</taxon>
        <taxon>Apicomplexa</taxon>
        <taxon>Aconoidasida</taxon>
        <taxon>Haemosporida</taxon>
        <taxon>Plasmodiidae</taxon>
        <taxon>Plasmodium</taxon>
        <taxon>Plasmodium (Vinckeia)</taxon>
    </lineage>
</organism>
<name>CRT_PLACH</name>
<comment type="function">
    <text evidence="1">Nutrient transporter (By similarity). Involved in maintaining the osmotic homeostasis of the digestive vacuole (By similarity).</text>
</comment>
<comment type="subcellular location">
    <subcellularLocation>
        <location evidence="1">Vacuole membrane</location>
        <topology evidence="3">Multi-pass membrane protein</topology>
    </subcellularLocation>
    <text evidence="1">Localizes to the parasite digestive vacuole, the site of chloroquine action.</text>
</comment>
<comment type="similarity">
    <text evidence="4">Belongs to the CRT-like transporter family.</text>
</comment>
<gene>
    <name evidence="4" type="primary">CRT</name>
    <name type="synonym">CG10</name>
</gene>
<dbReference type="EMBL" id="AY304549">
    <property type="protein sequence ID" value="AAP68830.1"/>
    <property type="molecule type" value="Genomic_DNA"/>
</dbReference>
<dbReference type="SMR" id="Q7Z0V9"/>
<dbReference type="GlyCosmos" id="Q7Z0V9">
    <property type="glycosylation" value="1 site, No reported glycans"/>
</dbReference>
<dbReference type="VEuPathDB" id="PlasmoDB:PCHAS_1220200"/>
<dbReference type="eggNOG" id="ENOG502QR5M">
    <property type="taxonomic scope" value="Eukaryota"/>
</dbReference>
<dbReference type="GO" id="GO:0005774">
    <property type="term" value="C:vacuolar membrane"/>
    <property type="evidence" value="ECO:0007669"/>
    <property type="project" value="UniProtKB-SubCell"/>
</dbReference>
<dbReference type="GO" id="GO:0042910">
    <property type="term" value="F:xenobiotic transmembrane transporter activity"/>
    <property type="evidence" value="ECO:0007669"/>
    <property type="project" value="InterPro"/>
</dbReference>
<dbReference type="GO" id="GO:0006865">
    <property type="term" value="P:amino acid transport"/>
    <property type="evidence" value="ECO:0007669"/>
    <property type="project" value="UniProtKB-KW"/>
</dbReference>
<dbReference type="InterPro" id="IPR013936">
    <property type="entry name" value="CRT-like"/>
</dbReference>
<dbReference type="InterPro" id="IPR017258">
    <property type="entry name" value="Transprt_Chloroquine"/>
</dbReference>
<dbReference type="PANTHER" id="PTHR31326">
    <property type="entry name" value="PROTEIN CLT2, CHLOROPLASTIC"/>
    <property type="match status" value="1"/>
</dbReference>
<dbReference type="PANTHER" id="PTHR31326:SF1">
    <property type="entry name" value="PROTEIN CLT2, CHLOROPLASTIC"/>
    <property type="match status" value="1"/>
</dbReference>
<dbReference type="Pfam" id="PF08627">
    <property type="entry name" value="CRT-like"/>
    <property type="match status" value="1"/>
</dbReference>
<dbReference type="PIRSF" id="PIRSF037671">
    <property type="entry name" value="Transprt_Chloroquine_res"/>
    <property type="match status" value="1"/>
</dbReference>
<protein>
    <recommendedName>
        <fullName>Putative chloroquine resistance transporter</fullName>
    </recommendedName>
    <alternativeName>
        <fullName>Probable transporter cg10</fullName>
        <shortName>pccg10</shortName>
    </alternativeName>
    <alternativeName>
        <fullName>pfcrt homolog</fullName>
    </alternativeName>
</protein>
<feature type="chain" id="PRO_0000385357" description="Putative chloroquine resistance transporter">
    <location>
        <begin position="1"/>
        <end position="424"/>
    </location>
</feature>
<feature type="topological domain" description="Cytoplasmic" evidence="4">
    <location>
        <begin position="1"/>
        <end position="56"/>
    </location>
</feature>
<feature type="transmembrane region" description="Helical" evidence="3">
    <location>
        <begin position="57"/>
        <end position="77"/>
    </location>
</feature>
<feature type="topological domain" description="Vacuolar" evidence="4">
    <location>
        <begin position="78"/>
        <end position="88"/>
    </location>
</feature>
<feature type="transmembrane region" description="Helical" evidence="3">
    <location>
        <begin position="89"/>
        <end position="109"/>
    </location>
</feature>
<feature type="topological domain" description="Cytoplasmic" evidence="4">
    <location>
        <begin position="110"/>
        <end position="125"/>
    </location>
</feature>
<feature type="transmembrane region" description="Helical" evidence="3">
    <location>
        <begin position="126"/>
        <end position="146"/>
    </location>
</feature>
<feature type="topological domain" description="Vacuolar" evidence="4">
    <location>
        <begin position="147"/>
        <end position="156"/>
    </location>
</feature>
<feature type="transmembrane region" description="Helical" evidence="3">
    <location>
        <begin position="157"/>
        <end position="177"/>
    </location>
</feature>
<feature type="topological domain" description="Cytoplasmic" evidence="4">
    <location>
        <begin position="178"/>
        <end position="180"/>
    </location>
</feature>
<feature type="transmembrane region" description="Helical" evidence="3">
    <location>
        <begin position="181"/>
        <end position="201"/>
    </location>
</feature>
<feature type="topological domain" description="Vacuolar" evidence="4">
    <location>
        <begin position="202"/>
        <end position="209"/>
    </location>
</feature>
<feature type="transmembrane region" description="Helical" evidence="3">
    <location>
        <begin position="210"/>
        <end position="230"/>
    </location>
</feature>
<feature type="topological domain" description="Cytoplasmic" evidence="4">
    <location>
        <begin position="231"/>
        <end position="248"/>
    </location>
</feature>
<feature type="transmembrane region" description="Helical" evidence="3">
    <location>
        <begin position="249"/>
        <end position="269"/>
    </location>
</feature>
<feature type="topological domain" description="Vacuolar" evidence="4">
    <location>
        <begin position="270"/>
        <end position="317"/>
    </location>
</feature>
<feature type="transmembrane region" description="Helical" evidence="3">
    <location>
        <begin position="318"/>
        <end position="338"/>
    </location>
</feature>
<feature type="topological domain" description="Cytoplasmic" evidence="4">
    <location>
        <begin position="339"/>
        <end position="346"/>
    </location>
</feature>
<feature type="transmembrane region" description="Helical" evidence="3">
    <location>
        <begin position="347"/>
        <end position="367"/>
    </location>
</feature>
<feature type="topological domain" description="Vacuolar" evidence="4">
    <location>
        <begin position="368"/>
        <end position="377"/>
    </location>
</feature>
<feature type="transmembrane region" description="Helical" evidence="3">
    <location>
        <begin position="378"/>
        <end position="398"/>
    </location>
</feature>
<feature type="topological domain" description="Cytoplasmic" evidence="4">
    <location>
        <begin position="399"/>
        <end position="424"/>
    </location>
</feature>
<feature type="glycosylation site" description="N-linked (GlcNAc...) asparagine" evidence="3">
    <location>
        <position position="86"/>
    </location>
</feature>
<feature type="disulfide bond" evidence="2">
    <location>
        <begin position="289"/>
        <end position="312"/>
    </location>
</feature>
<feature type="disulfide bond" evidence="2">
    <location>
        <begin position="301"/>
        <end position="309"/>
    </location>
</feature>
<sequence length="424" mass="48579">MTGMKKGKNKKKNVKNDERYKELDSLISNDSEIGNNSRWGGAKRICKLIGNEMRNNIYVYLLSILYLCVSVMNKVFSKRTLNKIGNYSFVTSEVHNMICTIVFQLLYFIYRKTSNPASRNESQKNFGWQFFLISLLDASTVIITMIGLTRTTGNIQSFIMQLIIPVNMYFCFIFLGYRYHLFNYLGAFIILITIAAVETVLSYETQSDNSIIFNLIMIFALIPLSFSNMTREVVFKKHKINIIRLNAMVALFQFFTSLLVLPVYNISFLKEIYMPFSEMGTNINDGLRCLFYGQSTIVENCGVGMVKMCDQCEGAWKTFITYSFFNICDNLLVCYIIDKFSTMTYTIVSCIQGPAITIAYYFKFLAGDVVRQPRLLDFLTLFGYLLGTIIYRIGNIILEKKKMLKALNTDGSEAELTSIETSTA</sequence>
<keyword id="KW-0029">Amino-acid transport</keyword>
<keyword id="KW-1015">Disulfide bond</keyword>
<keyword id="KW-0325">Glycoprotein</keyword>
<keyword id="KW-0472">Membrane</keyword>
<keyword id="KW-0812">Transmembrane</keyword>
<keyword id="KW-1133">Transmembrane helix</keyword>
<keyword id="KW-0813">Transport</keyword>
<keyword id="KW-0926">Vacuole</keyword>